<comment type="function">
    <text evidence="1">Converts the preformed base xanthine, a product of nucleic acid breakdown, to xanthosine 5'-monophosphate (XMP), so it can be reused for RNA or DNA synthesis.</text>
</comment>
<comment type="catalytic activity">
    <reaction evidence="1">
        <text>XMP + diphosphate = xanthine + 5-phospho-alpha-D-ribose 1-diphosphate</text>
        <dbReference type="Rhea" id="RHEA:10800"/>
        <dbReference type="ChEBI" id="CHEBI:17712"/>
        <dbReference type="ChEBI" id="CHEBI:33019"/>
        <dbReference type="ChEBI" id="CHEBI:57464"/>
        <dbReference type="ChEBI" id="CHEBI:58017"/>
        <dbReference type="EC" id="2.4.2.22"/>
    </reaction>
</comment>
<comment type="pathway">
    <text evidence="1">Purine metabolism; XMP biosynthesis via salvage pathway; XMP from xanthine: step 1/1.</text>
</comment>
<comment type="subunit">
    <text evidence="1">Homodimer.</text>
</comment>
<comment type="subcellular location">
    <subcellularLocation>
        <location evidence="1">Cytoplasm</location>
    </subcellularLocation>
</comment>
<comment type="similarity">
    <text evidence="1">Belongs to the purine/pyrimidine phosphoribosyltransferase family. Xpt subfamily.</text>
</comment>
<organism>
    <name type="scientific">Bifidobacterium animalis subsp. lactis (strain AD011)</name>
    <dbReference type="NCBI Taxonomy" id="442563"/>
    <lineage>
        <taxon>Bacteria</taxon>
        <taxon>Bacillati</taxon>
        <taxon>Actinomycetota</taxon>
        <taxon>Actinomycetes</taxon>
        <taxon>Bifidobacteriales</taxon>
        <taxon>Bifidobacteriaceae</taxon>
        <taxon>Bifidobacterium</taxon>
    </lineage>
</organism>
<reference key="1">
    <citation type="journal article" date="2009" name="J. Bacteriol.">
        <title>Genome sequence of the probiotic bacterium Bifidobacterium animalis subsp. lactis AD011.</title>
        <authorList>
            <person name="Kim J.F."/>
            <person name="Jeong H."/>
            <person name="Yu D.S."/>
            <person name="Choi S.-H."/>
            <person name="Hur C.-G."/>
            <person name="Park M.-S."/>
            <person name="Yoon S.H."/>
            <person name="Kim D.-W."/>
            <person name="Ji G.E."/>
            <person name="Park H.-S."/>
            <person name="Oh T.K."/>
        </authorList>
    </citation>
    <scope>NUCLEOTIDE SEQUENCE [LARGE SCALE GENOMIC DNA]</scope>
    <source>
        <strain>AD011</strain>
    </source>
</reference>
<name>XPT_BIFA0</name>
<sequence>MQELEERIREQGVVKPGNVLKVDAFLNHQCDVRLFDHMGAAWAEHFNNKHITKILTIEASGIGIACVAATHFDDVPVVFAKKAQSINLDGEQYVTHVYSFTKQKEFPVIVSKKYLNAGDRVLLIDDFLANGKALNGLIELCESAGAIVEGIGIAIEKGFQGGGDALREAGYDLDSLAIVESMDAETGAIEFRH</sequence>
<evidence type="ECO:0000255" key="1">
    <source>
        <dbReference type="HAMAP-Rule" id="MF_01184"/>
    </source>
</evidence>
<proteinExistence type="inferred from homology"/>
<feature type="chain" id="PRO_1000164447" description="Xanthine phosphoribosyltransferase">
    <location>
        <begin position="1"/>
        <end position="193"/>
    </location>
</feature>
<feature type="binding site" evidence="1">
    <location>
        <position position="20"/>
    </location>
    <ligand>
        <name>xanthine</name>
        <dbReference type="ChEBI" id="CHEBI:17712"/>
    </ligand>
</feature>
<feature type="binding site" evidence="1">
    <location>
        <position position="27"/>
    </location>
    <ligand>
        <name>xanthine</name>
        <dbReference type="ChEBI" id="CHEBI:17712"/>
    </ligand>
</feature>
<feature type="binding site" evidence="1">
    <location>
        <begin position="129"/>
        <end position="133"/>
    </location>
    <ligand>
        <name>5-phospho-alpha-D-ribose 1-diphosphate</name>
        <dbReference type="ChEBI" id="CHEBI:58017"/>
    </ligand>
</feature>
<feature type="binding site" evidence="1">
    <location>
        <position position="157"/>
    </location>
    <ligand>
        <name>xanthine</name>
        <dbReference type="ChEBI" id="CHEBI:17712"/>
    </ligand>
</feature>
<accession>B8DUR4</accession>
<protein>
    <recommendedName>
        <fullName evidence="1">Xanthine phosphoribosyltransferase</fullName>
        <shortName evidence="1">XPRTase</shortName>
        <ecNumber evidence="1">2.4.2.22</ecNumber>
    </recommendedName>
</protein>
<gene>
    <name evidence="1" type="primary">xpt</name>
    <name type="ordered locus">BLA_1460</name>
</gene>
<keyword id="KW-0963">Cytoplasm</keyword>
<keyword id="KW-0328">Glycosyltransferase</keyword>
<keyword id="KW-0660">Purine salvage</keyword>
<keyword id="KW-1185">Reference proteome</keyword>
<keyword id="KW-0808">Transferase</keyword>
<dbReference type="EC" id="2.4.2.22" evidence="1"/>
<dbReference type="EMBL" id="CP001213">
    <property type="protein sequence ID" value="ACL29743.1"/>
    <property type="molecule type" value="Genomic_DNA"/>
</dbReference>
<dbReference type="RefSeq" id="WP_004217806.1">
    <property type="nucleotide sequence ID" value="NC_011835.1"/>
</dbReference>
<dbReference type="SMR" id="B8DUR4"/>
<dbReference type="STRING" id="442563.BLA_1460"/>
<dbReference type="KEGG" id="bla:BLA_1460"/>
<dbReference type="HOGENOM" id="CLU_099015_0_0_11"/>
<dbReference type="UniPathway" id="UPA00602">
    <property type="reaction ID" value="UER00658"/>
</dbReference>
<dbReference type="Proteomes" id="UP000002456">
    <property type="component" value="Chromosome"/>
</dbReference>
<dbReference type="GO" id="GO:0005737">
    <property type="term" value="C:cytoplasm"/>
    <property type="evidence" value="ECO:0007669"/>
    <property type="project" value="UniProtKB-SubCell"/>
</dbReference>
<dbReference type="GO" id="GO:0000310">
    <property type="term" value="F:xanthine phosphoribosyltransferase activity"/>
    <property type="evidence" value="ECO:0007669"/>
    <property type="project" value="UniProtKB-UniRule"/>
</dbReference>
<dbReference type="GO" id="GO:0006166">
    <property type="term" value="P:purine ribonucleoside salvage"/>
    <property type="evidence" value="ECO:0007669"/>
    <property type="project" value="UniProtKB-KW"/>
</dbReference>
<dbReference type="GO" id="GO:0046110">
    <property type="term" value="P:xanthine metabolic process"/>
    <property type="evidence" value="ECO:0007669"/>
    <property type="project" value="InterPro"/>
</dbReference>
<dbReference type="GO" id="GO:0032265">
    <property type="term" value="P:XMP salvage"/>
    <property type="evidence" value="ECO:0007669"/>
    <property type="project" value="UniProtKB-UniRule"/>
</dbReference>
<dbReference type="CDD" id="cd06223">
    <property type="entry name" value="PRTases_typeI"/>
    <property type="match status" value="1"/>
</dbReference>
<dbReference type="Gene3D" id="3.40.50.2020">
    <property type="match status" value="1"/>
</dbReference>
<dbReference type="HAMAP" id="MF_01184">
    <property type="entry name" value="XPRTase"/>
    <property type="match status" value="1"/>
</dbReference>
<dbReference type="InterPro" id="IPR000836">
    <property type="entry name" value="PRibTrfase_dom"/>
</dbReference>
<dbReference type="InterPro" id="IPR029057">
    <property type="entry name" value="PRTase-like"/>
</dbReference>
<dbReference type="InterPro" id="IPR050118">
    <property type="entry name" value="Pur/Pyrimidine_PRTase"/>
</dbReference>
<dbReference type="InterPro" id="IPR010079">
    <property type="entry name" value="Xanthine_PRibTrfase"/>
</dbReference>
<dbReference type="NCBIfam" id="NF006671">
    <property type="entry name" value="PRK09219.1"/>
    <property type="match status" value="1"/>
</dbReference>
<dbReference type="NCBIfam" id="TIGR01744">
    <property type="entry name" value="XPRTase"/>
    <property type="match status" value="1"/>
</dbReference>
<dbReference type="PANTHER" id="PTHR43864">
    <property type="entry name" value="HYPOXANTHINE/GUANINE PHOSPHORIBOSYLTRANSFERASE"/>
    <property type="match status" value="1"/>
</dbReference>
<dbReference type="PANTHER" id="PTHR43864:SF1">
    <property type="entry name" value="XANTHINE PHOSPHORIBOSYLTRANSFERASE"/>
    <property type="match status" value="1"/>
</dbReference>
<dbReference type="Pfam" id="PF00156">
    <property type="entry name" value="Pribosyltran"/>
    <property type="match status" value="1"/>
</dbReference>
<dbReference type="SUPFAM" id="SSF53271">
    <property type="entry name" value="PRTase-like"/>
    <property type="match status" value="1"/>
</dbReference>